<protein>
    <recommendedName>
        <fullName evidence="1">ATP synthase subunit beta</fullName>
        <ecNumber evidence="1">7.1.2.2</ecNumber>
    </recommendedName>
    <alternativeName>
        <fullName evidence="1">ATP synthase F1 sector subunit beta</fullName>
    </alternativeName>
    <alternativeName>
        <fullName evidence="1">F-ATPase subunit beta</fullName>
    </alternativeName>
</protein>
<gene>
    <name evidence="1" type="primary">atpD</name>
    <name type="ordered locus">Acry_1681</name>
</gene>
<evidence type="ECO:0000255" key="1">
    <source>
        <dbReference type="HAMAP-Rule" id="MF_01347"/>
    </source>
</evidence>
<feature type="chain" id="PRO_0000339468" description="ATP synthase subunit beta">
    <location>
        <begin position="1"/>
        <end position="476"/>
    </location>
</feature>
<feature type="binding site" evidence="1">
    <location>
        <begin position="152"/>
        <end position="159"/>
    </location>
    <ligand>
        <name>ATP</name>
        <dbReference type="ChEBI" id="CHEBI:30616"/>
    </ligand>
</feature>
<reference key="1">
    <citation type="submission" date="2007-05" db="EMBL/GenBank/DDBJ databases">
        <title>Complete sequence of chromosome of Acidiphilium cryptum JF-5.</title>
        <authorList>
            <consortium name="US DOE Joint Genome Institute"/>
            <person name="Copeland A."/>
            <person name="Lucas S."/>
            <person name="Lapidus A."/>
            <person name="Barry K."/>
            <person name="Detter J.C."/>
            <person name="Glavina del Rio T."/>
            <person name="Hammon N."/>
            <person name="Israni S."/>
            <person name="Dalin E."/>
            <person name="Tice H."/>
            <person name="Pitluck S."/>
            <person name="Sims D."/>
            <person name="Brettin T."/>
            <person name="Bruce D."/>
            <person name="Han C."/>
            <person name="Schmutz J."/>
            <person name="Larimer F."/>
            <person name="Land M."/>
            <person name="Hauser L."/>
            <person name="Kyrpides N."/>
            <person name="Kim E."/>
            <person name="Magnuson T."/>
            <person name="Richardson P."/>
        </authorList>
    </citation>
    <scope>NUCLEOTIDE SEQUENCE [LARGE SCALE GENOMIC DNA]</scope>
    <source>
        <strain>JF-5</strain>
    </source>
</reference>
<name>ATPB_ACICJ</name>
<organism>
    <name type="scientific">Acidiphilium cryptum (strain JF-5)</name>
    <dbReference type="NCBI Taxonomy" id="349163"/>
    <lineage>
        <taxon>Bacteria</taxon>
        <taxon>Pseudomonadati</taxon>
        <taxon>Pseudomonadota</taxon>
        <taxon>Alphaproteobacteria</taxon>
        <taxon>Acetobacterales</taxon>
        <taxon>Acidocellaceae</taxon>
        <taxon>Acidiphilium</taxon>
    </lineage>
</organism>
<sequence>MAKNVTGRITQIMGPVVDVQFEGELPYILNALETRVGDRRLVLEVAQEIGERTVRCIAMDSTDGLARGDEVRDTGEAIAVPVGPETLGRILNVIGEPIDERGPIPTTRTAPIHRQAPSFDEQATSAEILVTGIKVVDLLAPYLKGGKIGLFGGAGVGKTVLIQELINNIAKGHGGVSVFAGVGERTREGNDLYHEMIDAGVIKLGEGTTEGSKVALVYGQMNEPPGARMRVGLSGLTMAEYFRDEEGQDVLFFVDNIFRFTQAGAEVSALLGRIPSAVGYQPTLATDMGALQERITSTKKGSITSVQAIYVPADDLTDPAPATSFSHLDATTTLNRAIAEKGIYPAVDPLDSTSRALDPRIVGEEHYNVAREVQRILQSYKSLQDIIAILGMDELSEDDKLTVARARKIERFLSQPFHVAEVFTGSPGIFVPVEDTVRSFKAICAGEYDHLPEAAFYMVGTIEDAVKKAESLNATA</sequence>
<keyword id="KW-0066">ATP synthesis</keyword>
<keyword id="KW-0067">ATP-binding</keyword>
<keyword id="KW-0997">Cell inner membrane</keyword>
<keyword id="KW-1003">Cell membrane</keyword>
<keyword id="KW-0139">CF(1)</keyword>
<keyword id="KW-0375">Hydrogen ion transport</keyword>
<keyword id="KW-0406">Ion transport</keyword>
<keyword id="KW-0472">Membrane</keyword>
<keyword id="KW-0547">Nucleotide-binding</keyword>
<keyword id="KW-1185">Reference proteome</keyword>
<keyword id="KW-1278">Translocase</keyword>
<keyword id="KW-0813">Transport</keyword>
<comment type="function">
    <text evidence="1">Produces ATP from ADP in the presence of a proton gradient across the membrane. The catalytic sites are hosted primarily by the beta subunits.</text>
</comment>
<comment type="catalytic activity">
    <reaction evidence="1">
        <text>ATP + H2O + 4 H(+)(in) = ADP + phosphate + 5 H(+)(out)</text>
        <dbReference type="Rhea" id="RHEA:57720"/>
        <dbReference type="ChEBI" id="CHEBI:15377"/>
        <dbReference type="ChEBI" id="CHEBI:15378"/>
        <dbReference type="ChEBI" id="CHEBI:30616"/>
        <dbReference type="ChEBI" id="CHEBI:43474"/>
        <dbReference type="ChEBI" id="CHEBI:456216"/>
        <dbReference type="EC" id="7.1.2.2"/>
    </reaction>
</comment>
<comment type="subunit">
    <text evidence="1">F-type ATPases have 2 components, CF(1) - the catalytic core - and CF(0) - the membrane proton channel. CF(1) has five subunits: alpha(3), beta(3), gamma(1), delta(1), epsilon(1). CF(0) has three main subunits: a(1), b(2) and c(9-12). The alpha and beta chains form an alternating ring which encloses part of the gamma chain. CF(1) is attached to CF(0) by a central stalk formed by the gamma and epsilon chains, while a peripheral stalk is formed by the delta and b chains.</text>
</comment>
<comment type="subcellular location">
    <subcellularLocation>
        <location evidence="1">Cell inner membrane</location>
        <topology evidence="1">Peripheral membrane protein</topology>
    </subcellularLocation>
</comment>
<comment type="similarity">
    <text evidence="1">Belongs to the ATPase alpha/beta chains family.</text>
</comment>
<dbReference type="EC" id="7.1.2.2" evidence="1"/>
<dbReference type="EMBL" id="CP000697">
    <property type="protein sequence ID" value="ABQ30886.1"/>
    <property type="molecule type" value="Genomic_DNA"/>
</dbReference>
<dbReference type="RefSeq" id="WP_007423083.1">
    <property type="nucleotide sequence ID" value="NC_009484.1"/>
</dbReference>
<dbReference type="SMR" id="A5FZ54"/>
<dbReference type="STRING" id="349163.Acry_1681"/>
<dbReference type="KEGG" id="acr:Acry_1681"/>
<dbReference type="eggNOG" id="COG0055">
    <property type="taxonomic scope" value="Bacteria"/>
</dbReference>
<dbReference type="HOGENOM" id="CLU_022398_0_2_5"/>
<dbReference type="Proteomes" id="UP000000245">
    <property type="component" value="Chromosome"/>
</dbReference>
<dbReference type="GO" id="GO:0005886">
    <property type="term" value="C:plasma membrane"/>
    <property type="evidence" value="ECO:0007669"/>
    <property type="project" value="UniProtKB-SubCell"/>
</dbReference>
<dbReference type="GO" id="GO:0045259">
    <property type="term" value="C:proton-transporting ATP synthase complex"/>
    <property type="evidence" value="ECO:0007669"/>
    <property type="project" value="UniProtKB-KW"/>
</dbReference>
<dbReference type="GO" id="GO:0005524">
    <property type="term" value="F:ATP binding"/>
    <property type="evidence" value="ECO:0007669"/>
    <property type="project" value="UniProtKB-UniRule"/>
</dbReference>
<dbReference type="GO" id="GO:0016887">
    <property type="term" value="F:ATP hydrolysis activity"/>
    <property type="evidence" value="ECO:0007669"/>
    <property type="project" value="InterPro"/>
</dbReference>
<dbReference type="GO" id="GO:0046933">
    <property type="term" value="F:proton-transporting ATP synthase activity, rotational mechanism"/>
    <property type="evidence" value="ECO:0007669"/>
    <property type="project" value="UniProtKB-UniRule"/>
</dbReference>
<dbReference type="CDD" id="cd18110">
    <property type="entry name" value="ATP-synt_F1_beta_C"/>
    <property type="match status" value="1"/>
</dbReference>
<dbReference type="CDD" id="cd18115">
    <property type="entry name" value="ATP-synt_F1_beta_N"/>
    <property type="match status" value="1"/>
</dbReference>
<dbReference type="CDD" id="cd01133">
    <property type="entry name" value="F1-ATPase_beta_CD"/>
    <property type="match status" value="1"/>
</dbReference>
<dbReference type="FunFam" id="1.10.1140.10:FF:000001">
    <property type="entry name" value="ATP synthase subunit beta"/>
    <property type="match status" value="1"/>
</dbReference>
<dbReference type="FunFam" id="2.40.10.170:FF:000005">
    <property type="entry name" value="ATP synthase subunit beta"/>
    <property type="match status" value="1"/>
</dbReference>
<dbReference type="FunFam" id="3.40.50.300:FF:000026">
    <property type="entry name" value="ATP synthase subunit beta"/>
    <property type="match status" value="1"/>
</dbReference>
<dbReference type="Gene3D" id="2.40.10.170">
    <property type="match status" value="1"/>
</dbReference>
<dbReference type="Gene3D" id="1.10.1140.10">
    <property type="entry name" value="Bovine Mitochondrial F1-atpase, Atp Synthase Beta Chain, Chain D, domain 3"/>
    <property type="match status" value="1"/>
</dbReference>
<dbReference type="Gene3D" id="3.40.50.300">
    <property type="entry name" value="P-loop containing nucleotide triphosphate hydrolases"/>
    <property type="match status" value="1"/>
</dbReference>
<dbReference type="HAMAP" id="MF_01347">
    <property type="entry name" value="ATP_synth_beta_bact"/>
    <property type="match status" value="1"/>
</dbReference>
<dbReference type="InterPro" id="IPR003593">
    <property type="entry name" value="AAA+_ATPase"/>
</dbReference>
<dbReference type="InterPro" id="IPR055190">
    <property type="entry name" value="ATP-synt_VA_C"/>
</dbReference>
<dbReference type="InterPro" id="IPR005722">
    <property type="entry name" value="ATP_synth_F1_bsu"/>
</dbReference>
<dbReference type="InterPro" id="IPR020003">
    <property type="entry name" value="ATPase_a/bsu_AS"/>
</dbReference>
<dbReference type="InterPro" id="IPR050053">
    <property type="entry name" value="ATPase_alpha/beta_chains"/>
</dbReference>
<dbReference type="InterPro" id="IPR004100">
    <property type="entry name" value="ATPase_F1/V1/A1_a/bsu_N"/>
</dbReference>
<dbReference type="InterPro" id="IPR036121">
    <property type="entry name" value="ATPase_F1/V1/A1_a/bsu_N_sf"/>
</dbReference>
<dbReference type="InterPro" id="IPR000194">
    <property type="entry name" value="ATPase_F1/V1/A1_a/bsu_nucl-bd"/>
</dbReference>
<dbReference type="InterPro" id="IPR024034">
    <property type="entry name" value="ATPase_F1/V1_b/a_C"/>
</dbReference>
<dbReference type="InterPro" id="IPR027417">
    <property type="entry name" value="P-loop_NTPase"/>
</dbReference>
<dbReference type="NCBIfam" id="TIGR01039">
    <property type="entry name" value="atpD"/>
    <property type="match status" value="1"/>
</dbReference>
<dbReference type="PANTHER" id="PTHR15184">
    <property type="entry name" value="ATP SYNTHASE"/>
    <property type="match status" value="1"/>
</dbReference>
<dbReference type="PANTHER" id="PTHR15184:SF71">
    <property type="entry name" value="ATP SYNTHASE SUBUNIT BETA, MITOCHONDRIAL"/>
    <property type="match status" value="1"/>
</dbReference>
<dbReference type="Pfam" id="PF00006">
    <property type="entry name" value="ATP-synt_ab"/>
    <property type="match status" value="1"/>
</dbReference>
<dbReference type="Pfam" id="PF02874">
    <property type="entry name" value="ATP-synt_ab_N"/>
    <property type="match status" value="1"/>
</dbReference>
<dbReference type="Pfam" id="PF22919">
    <property type="entry name" value="ATP-synt_VA_C"/>
    <property type="match status" value="1"/>
</dbReference>
<dbReference type="PIRSF" id="PIRSF039072">
    <property type="entry name" value="ATPase_subunit_beta"/>
    <property type="match status" value="1"/>
</dbReference>
<dbReference type="SMART" id="SM00382">
    <property type="entry name" value="AAA"/>
    <property type="match status" value="1"/>
</dbReference>
<dbReference type="SUPFAM" id="SSF47917">
    <property type="entry name" value="C-terminal domain of alpha and beta subunits of F1 ATP synthase"/>
    <property type="match status" value="1"/>
</dbReference>
<dbReference type="SUPFAM" id="SSF50615">
    <property type="entry name" value="N-terminal domain of alpha and beta subunits of F1 ATP synthase"/>
    <property type="match status" value="1"/>
</dbReference>
<dbReference type="SUPFAM" id="SSF52540">
    <property type="entry name" value="P-loop containing nucleoside triphosphate hydrolases"/>
    <property type="match status" value="1"/>
</dbReference>
<dbReference type="PROSITE" id="PS00152">
    <property type="entry name" value="ATPASE_ALPHA_BETA"/>
    <property type="match status" value="1"/>
</dbReference>
<accession>A5FZ54</accession>
<proteinExistence type="inferred from homology"/>